<proteinExistence type="inferred from homology"/>
<accession>Q8D7T8</accession>
<gene>
    <name evidence="1" type="primary">rbsD</name>
    <name type="ordered locus">VV2_0061</name>
</gene>
<evidence type="ECO:0000255" key="1">
    <source>
        <dbReference type="HAMAP-Rule" id="MF_01661"/>
    </source>
</evidence>
<organism>
    <name type="scientific">Vibrio vulnificus (strain CMCP6)</name>
    <dbReference type="NCBI Taxonomy" id="216895"/>
    <lineage>
        <taxon>Bacteria</taxon>
        <taxon>Pseudomonadati</taxon>
        <taxon>Pseudomonadota</taxon>
        <taxon>Gammaproteobacteria</taxon>
        <taxon>Vibrionales</taxon>
        <taxon>Vibrionaceae</taxon>
        <taxon>Vibrio</taxon>
    </lineage>
</organism>
<sequence>MKKSALLNSELSYLVATLGHTDEITICDAGLPIPDGVSRIDLALTHGVPSFIETVRVMLSESQIEGAIVATEFAEVSPELYQALVAELQCEEEKTGKVLSLTHVSHEEFKQRTESSKAVVRTGECTPYANVIFQAGVVF</sequence>
<reference key="1">
    <citation type="submission" date="2002-12" db="EMBL/GenBank/DDBJ databases">
        <title>Complete genome sequence of Vibrio vulnificus CMCP6.</title>
        <authorList>
            <person name="Rhee J.H."/>
            <person name="Kim S.Y."/>
            <person name="Chung S.S."/>
            <person name="Kim J.J."/>
            <person name="Moon Y.H."/>
            <person name="Jeong H."/>
            <person name="Choy H.E."/>
        </authorList>
    </citation>
    <scope>NUCLEOTIDE SEQUENCE [LARGE SCALE GENOMIC DNA]</scope>
    <source>
        <strain>CMCP6</strain>
    </source>
</reference>
<name>RBSD_VIBVU</name>
<comment type="function">
    <text evidence="1">Catalyzes the interconversion of beta-pyran and beta-furan forms of D-ribose.</text>
</comment>
<comment type="catalytic activity">
    <reaction evidence="1">
        <text>beta-D-ribopyranose = beta-D-ribofuranose</text>
        <dbReference type="Rhea" id="RHEA:25432"/>
        <dbReference type="ChEBI" id="CHEBI:27476"/>
        <dbReference type="ChEBI" id="CHEBI:47002"/>
        <dbReference type="EC" id="5.4.99.62"/>
    </reaction>
</comment>
<comment type="pathway">
    <text evidence="1">Carbohydrate metabolism; D-ribose degradation; D-ribose 5-phosphate from beta-D-ribopyranose: step 1/2.</text>
</comment>
<comment type="subunit">
    <text evidence="1">Homodecamer.</text>
</comment>
<comment type="subcellular location">
    <subcellularLocation>
        <location evidence="1">Cytoplasm</location>
    </subcellularLocation>
</comment>
<comment type="similarity">
    <text evidence="1">Belongs to the RbsD / FucU family. RbsD subfamily.</text>
</comment>
<dbReference type="EC" id="5.4.99.62" evidence="1"/>
<dbReference type="EMBL" id="AE016796">
    <property type="protein sequence ID" value="AAO07037.1"/>
    <property type="molecule type" value="Genomic_DNA"/>
</dbReference>
<dbReference type="RefSeq" id="WP_011081049.1">
    <property type="nucleotide sequence ID" value="NC_004460.2"/>
</dbReference>
<dbReference type="SMR" id="Q8D7T8"/>
<dbReference type="GeneID" id="93898236"/>
<dbReference type="KEGG" id="vvu:VV2_0061"/>
<dbReference type="HOGENOM" id="CLU_135498_0_0_6"/>
<dbReference type="UniPathway" id="UPA00916">
    <property type="reaction ID" value="UER00888"/>
</dbReference>
<dbReference type="Proteomes" id="UP000002275">
    <property type="component" value="Chromosome 2"/>
</dbReference>
<dbReference type="GO" id="GO:0005829">
    <property type="term" value="C:cytosol"/>
    <property type="evidence" value="ECO:0007669"/>
    <property type="project" value="TreeGrafter"/>
</dbReference>
<dbReference type="GO" id="GO:0062193">
    <property type="term" value="F:D-ribose pyranase activity"/>
    <property type="evidence" value="ECO:0007669"/>
    <property type="project" value="UniProtKB-EC"/>
</dbReference>
<dbReference type="GO" id="GO:0016872">
    <property type="term" value="F:intramolecular lyase activity"/>
    <property type="evidence" value="ECO:0007669"/>
    <property type="project" value="UniProtKB-UniRule"/>
</dbReference>
<dbReference type="GO" id="GO:0048029">
    <property type="term" value="F:monosaccharide binding"/>
    <property type="evidence" value="ECO:0007669"/>
    <property type="project" value="InterPro"/>
</dbReference>
<dbReference type="GO" id="GO:0019303">
    <property type="term" value="P:D-ribose catabolic process"/>
    <property type="evidence" value="ECO:0007669"/>
    <property type="project" value="UniProtKB-UniRule"/>
</dbReference>
<dbReference type="Gene3D" id="3.40.1650.10">
    <property type="entry name" value="RbsD-like domain"/>
    <property type="match status" value="1"/>
</dbReference>
<dbReference type="HAMAP" id="MF_01661">
    <property type="entry name" value="D_rib_pyranase"/>
    <property type="match status" value="1"/>
</dbReference>
<dbReference type="InterPro" id="IPR023064">
    <property type="entry name" value="D-ribose_pyranase"/>
</dbReference>
<dbReference type="InterPro" id="IPR023750">
    <property type="entry name" value="RbsD-like_sf"/>
</dbReference>
<dbReference type="InterPro" id="IPR007721">
    <property type="entry name" value="RbsD_FucU"/>
</dbReference>
<dbReference type="NCBIfam" id="NF008761">
    <property type="entry name" value="PRK11797.1"/>
    <property type="match status" value="1"/>
</dbReference>
<dbReference type="PANTHER" id="PTHR37831">
    <property type="entry name" value="D-RIBOSE PYRANASE"/>
    <property type="match status" value="1"/>
</dbReference>
<dbReference type="PANTHER" id="PTHR37831:SF1">
    <property type="entry name" value="D-RIBOSE PYRANASE"/>
    <property type="match status" value="1"/>
</dbReference>
<dbReference type="Pfam" id="PF05025">
    <property type="entry name" value="RbsD_FucU"/>
    <property type="match status" value="1"/>
</dbReference>
<dbReference type="SUPFAM" id="SSF102546">
    <property type="entry name" value="RbsD-like"/>
    <property type="match status" value="1"/>
</dbReference>
<feature type="chain" id="PRO_0000346298" description="D-ribose pyranase">
    <location>
        <begin position="1"/>
        <end position="139"/>
    </location>
</feature>
<feature type="active site" description="Proton donor" evidence="1">
    <location>
        <position position="20"/>
    </location>
</feature>
<feature type="binding site" evidence="1">
    <location>
        <position position="28"/>
    </location>
    <ligand>
        <name>substrate</name>
    </ligand>
</feature>
<feature type="binding site" evidence="1">
    <location>
        <position position="106"/>
    </location>
    <ligand>
        <name>substrate</name>
    </ligand>
</feature>
<feature type="binding site" evidence="1">
    <location>
        <begin position="128"/>
        <end position="130"/>
    </location>
    <ligand>
        <name>substrate</name>
    </ligand>
</feature>
<protein>
    <recommendedName>
        <fullName evidence="1">D-ribose pyranase</fullName>
        <ecNumber evidence="1">5.4.99.62</ecNumber>
    </recommendedName>
</protein>
<keyword id="KW-0119">Carbohydrate metabolism</keyword>
<keyword id="KW-0963">Cytoplasm</keyword>
<keyword id="KW-0413">Isomerase</keyword>